<organism>
    <name type="scientific">Mycobacterium tuberculosis (strain CDC 1551 / Oshkosh)</name>
    <dbReference type="NCBI Taxonomy" id="83331"/>
    <lineage>
        <taxon>Bacteria</taxon>
        <taxon>Bacillati</taxon>
        <taxon>Actinomycetota</taxon>
        <taxon>Actinomycetes</taxon>
        <taxon>Mycobacteriales</taxon>
        <taxon>Mycobacteriaceae</taxon>
        <taxon>Mycobacterium</taxon>
        <taxon>Mycobacterium tuberculosis complex</taxon>
    </lineage>
</organism>
<gene>
    <name evidence="1" type="primary">vapC24</name>
    <name type="ordered locus">MT0254</name>
</gene>
<evidence type="ECO:0000255" key="1">
    <source>
        <dbReference type="HAMAP-Rule" id="MF_00265"/>
    </source>
</evidence>
<dbReference type="EC" id="3.1.-.-" evidence="1"/>
<dbReference type="EMBL" id="AE000516">
    <property type="protein sequence ID" value="AAK44472.1"/>
    <property type="molecule type" value="Genomic_DNA"/>
</dbReference>
<dbReference type="PIR" id="D70938">
    <property type="entry name" value="D70938"/>
</dbReference>
<dbReference type="RefSeq" id="WP_003900837.1">
    <property type="nucleotide sequence ID" value="NZ_KK341227.1"/>
</dbReference>
<dbReference type="SMR" id="P9WF86"/>
<dbReference type="KEGG" id="mtc:MT0254"/>
<dbReference type="PATRIC" id="fig|83331.31.peg.272"/>
<dbReference type="HOGENOM" id="CLU_146668_2_0_11"/>
<dbReference type="Proteomes" id="UP000001020">
    <property type="component" value="Chromosome"/>
</dbReference>
<dbReference type="GO" id="GO:0000287">
    <property type="term" value="F:magnesium ion binding"/>
    <property type="evidence" value="ECO:0007669"/>
    <property type="project" value="UniProtKB-UniRule"/>
</dbReference>
<dbReference type="GO" id="GO:0004540">
    <property type="term" value="F:RNA nuclease activity"/>
    <property type="evidence" value="ECO:0007669"/>
    <property type="project" value="InterPro"/>
</dbReference>
<dbReference type="GO" id="GO:0045926">
    <property type="term" value="P:negative regulation of growth"/>
    <property type="evidence" value="ECO:0007669"/>
    <property type="project" value="UniProtKB-ARBA"/>
</dbReference>
<dbReference type="FunFam" id="3.40.50.1010:FF:000069">
    <property type="entry name" value="Ribonuclease VapC"/>
    <property type="match status" value="1"/>
</dbReference>
<dbReference type="Gene3D" id="3.40.50.1010">
    <property type="entry name" value="5'-nuclease"/>
    <property type="match status" value="1"/>
</dbReference>
<dbReference type="HAMAP" id="MF_00265">
    <property type="entry name" value="VapC_Nob1"/>
    <property type="match status" value="1"/>
</dbReference>
<dbReference type="InterPro" id="IPR006226">
    <property type="entry name" value="Mtu_PIN"/>
</dbReference>
<dbReference type="InterPro" id="IPR029060">
    <property type="entry name" value="PIN-like_dom_sf"/>
</dbReference>
<dbReference type="InterPro" id="IPR002716">
    <property type="entry name" value="PIN_dom"/>
</dbReference>
<dbReference type="InterPro" id="IPR022907">
    <property type="entry name" value="VapC_family"/>
</dbReference>
<dbReference type="NCBIfam" id="TIGR00028">
    <property type="entry name" value="Mtu_PIN_fam"/>
    <property type="match status" value="1"/>
</dbReference>
<dbReference type="Pfam" id="PF01850">
    <property type="entry name" value="PIN"/>
    <property type="match status" value="1"/>
</dbReference>
<dbReference type="SUPFAM" id="SSF88723">
    <property type="entry name" value="PIN domain-like"/>
    <property type="match status" value="1"/>
</dbReference>
<accession>P9WF86</accession>
<accession>L0T2X7</accession>
<accession>O53663</accession>
<accession>Q7DA71</accession>
<name>VPC24_MYCTO</name>
<proteinExistence type="inferred from homology"/>
<keyword id="KW-0378">Hydrolase</keyword>
<keyword id="KW-0460">Magnesium</keyword>
<keyword id="KW-0479">Metal-binding</keyword>
<keyword id="KW-0540">Nuclease</keyword>
<keyword id="KW-1185">Reference proteome</keyword>
<keyword id="KW-1277">Toxin-antitoxin system</keyword>
<sequence>MLSIDTNILLYAQNRDCPEHDAAAAFLVECAGRADVAVCELVLMELYQLLRNPTVVTRPLEGPEAAEVCQTFRRNRRWALLENAPVMNEVWVLAATPRIARRRLFDARLALTLRHHGVDEFATRNINGFTDFGFSRVWDPITSDG</sequence>
<protein>
    <recommendedName>
        <fullName evidence="1">Ribonuclease VapC24</fullName>
        <shortName evidence="1">RNase VapC24</shortName>
        <ecNumber evidence="1">3.1.-.-</ecNumber>
    </recommendedName>
    <alternativeName>
        <fullName evidence="1">Toxin VapC24</fullName>
    </alternativeName>
</protein>
<comment type="function">
    <text evidence="1">Toxic component of a type II toxin-antitoxin (TA) system. An RNase. Its cognate antitoxin is VapB24 (By similarity).</text>
</comment>
<comment type="cofactor">
    <cofactor evidence="1">
        <name>Mg(2+)</name>
        <dbReference type="ChEBI" id="CHEBI:18420"/>
    </cofactor>
</comment>
<comment type="similarity">
    <text evidence="1">Belongs to the PINc/VapC protein family.</text>
</comment>
<reference key="1">
    <citation type="journal article" date="2002" name="J. Bacteriol.">
        <title>Whole-genome comparison of Mycobacterium tuberculosis clinical and laboratory strains.</title>
        <authorList>
            <person name="Fleischmann R.D."/>
            <person name="Alland D."/>
            <person name="Eisen J.A."/>
            <person name="Carpenter L."/>
            <person name="White O."/>
            <person name="Peterson J.D."/>
            <person name="DeBoy R.T."/>
            <person name="Dodson R.J."/>
            <person name="Gwinn M.L."/>
            <person name="Haft D.H."/>
            <person name="Hickey E.K."/>
            <person name="Kolonay J.F."/>
            <person name="Nelson W.C."/>
            <person name="Umayam L.A."/>
            <person name="Ermolaeva M.D."/>
            <person name="Salzberg S.L."/>
            <person name="Delcher A."/>
            <person name="Utterback T.R."/>
            <person name="Weidman J.F."/>
            <person name="Khouri H.M."/>
            <person name="Gill J."/>
            <person name="Mikula A."/>
            <person name="Bishai W."/>
            <person name="Jacobs W.R. Jr."/>
            <person name="Venter J.C."/>
            <person name="Fraser C.M."/>
        </authorList>
    </citation>
    <scope>NUCLEOTIDE SEQUENCE [LARGE SCALE GENOMIC DNA]</scope>
    <source>
        <strain>CDC 1551 / Oshkosh</strain>
    </source>
</reference>
<feature type="chain" id="PRO_0000428582" description="Ribonuclease VapC24">
    <location>
        <begin position="1"/>
        <end position="145"/>
    </location>
</feature>
<feature type="domain" description="PINc" evidence="1">
    <location>
        <begin position="4"/>
        <end position="123"/>
    </location>
</feature>
<feature type="binding site" evidence="1">
    <location>
        <position position="5"/>
    </location>
    <ligand>
        <name>Mg(2+)</name>
        <dbReference type="ChEBI" id="CHEBI:18420"/>
    </ligand>
</feature>
<feature type="binding site" evidence="1">
    <location>
        <position position="106"/>
    </location>
    <ligand>
        <name>Mg(2+)</name>
        <dbReference type="ChEBI" id="CHEBI:18420"/>
    </ligand>
</feature>